<accession>B4RZU1</accession>
<accession>F2G3A6</accession>
<dbReference type="EMBL" id="CP001103">
    <property type="protein sequence ID" value="AEA98278.1"/>
    <property type="molecule type" value="Genomic_DNA"/>
</dbReference>
<dbReference type="RefSeq" id="WP_012518601.1">
    <property type="nucleotide sequence ID" value="NC_011138.3"/>
</dbReference>
<dbReference type="SMR" id="B4RZU1"/>
<dbReference type="KEGG" id="amc:MADE_1010700"/>
<dbReference type="HOGENOM" id="CLU_114342_1_2_6"/>
<dbReference type="Proteomes" id="UP000001870">
    <property type="component" value="Chromosome"/>
</dbReference>
<dbReference type="GO" id="GO:0005886">
    <property type="term" value="C:plasma membrane"/>
    <property type="evidence" value="ECO:0007669"/>
    <property type="project" value="UniProtKB-SubCell"/>
</dbReference>
<dbReference type="GO" id="GO:0062054">
    <property type="term" value="F:fluoride channel activity"/>
    <property type="evidence" value="ECO:0007669"/>
    <property type="project" value="UniProtKB-UniRule"/>
</dbReference>
<dbReference type="GO" id="GO:0046872">
    <property type="term" value="F:metal ion binding"/>
    <property type="evidence" value="ECO:0007669"/>
    <property type="project" value="UniProtKB-KW"/>
</dbReference>
<dbReference type="GO" id="GO:0140114">
    <property type="term" value="P:cellular detoxification of fluoride"/>
    <property type="evidence" value="ECO:0007669"/>
    <property type="project" value="UniProtKB-UniRule"/>
</dbReference>
<dbReference type="HAMAP" id="MF_00454">
    <property type="entry name" value="FluC"/>
    <property type="match status" value="1"/>
</dbReference>
<dbReference type="InterPro" id="IPR003691">
    <property type="entry name" value="FluC"/>
</dbReference>
<dbReference type="NCBIfam" id="TIGR00494">
    <property type="entry name" value="crcB"/>
    <property type="match status" value="1"/>
</dbReference>
<dbReference type="PANTHER" id="PTHR28259">
    <property type="entry name" value="FLUORIDE EXPORT PROTEIN 1-RELATED"/>
    <property type="match status" value="1"/>
</dbReference>
<dbReference type="PANTHER" id="PTHR28259:SF1">
    <property type="entry name" value="FLUORIDE EXPORT PROTEIN 1-RELATED"/>
    <property type="match status" value="1"/>
</dbReference>
<dbReference type="Pfam" id="PF02537">
    <property type="entry name" value="CRCB"/>
    <property type="match status" value="1"/>
</dbReference>
<evidence type="ECO:0000255" key="1">
    <source>
        <dbReference type="HAMAP-Rule" id="MF_00454"/>
    </source>
</evidence>
<protein>
    <recommendedName>
        <fullName evidence="1">Fluoride-specific ion channel FluC</fullName>
    </recommendedName>
</protein>
<reference key="1">
    <citation type="journal article" date="2008" name="ISME J.">
        <title>Comparative genomics of two ecotypes of the marine planktonic copiotroph Alteromonas macleodii suggests alternative lifestyles associated with different kinds of particulate organic matter.</title>
        <authorList>
            <person name="Ivars-Martinez E."/>
            <person name="Martin-Cuadrado A.-B."/>
            <person name="D'Auria G."/>
            <person name="Mira A."/>
            <person name="Ferriera S."/>
            <person name="Johnson J."/>
            <person name="Friedman R."/>
            <person name="Rodriguez-Valera F."/>
        </authorList>
    </citation>
    <scope>NUCLEOTIDE SEQUENCE [LARGE SCALE GENOMIC DNA]</scope>
    <source>
        <strain>DSM 17117 / CIP 110805 / LMG 28347 / Deep ecotype</strain>
    </source>
</reference>
<comment type="function">
    <text evidence="1">Fluoride-specific ion channel. Important for reducing fluoride concentration in the cell, thus reducing its toxicity.</text>
</comment>
<comment type="catalytic activity">
    <reaction evidence="1">
        <text>fluoride(in) = fluoride(out)</text>
        <dbReference type="Rhea" id="RHEA:76159"/>
        <dbReference type="ChEBI" id="CHEBI:17051"/>
    </reaction>
    <physiologicalReaction direction="left-to-right" evidence="1">
        <dbReference type="Rhea" id="RHEA:76160"/>
    </physiologicalReaction>
</comment>
<comment type="activity regulation">
    <text evidence="1">Na(+) is not transported, but it plays an essential structural role and its presence is essential for fluoride channel function.</text>
</comment>
<comment type="subcellular location">
    <subcellularLocation>
        <location evidence="1">Cell inner membrane</location>
        <topology evidence="1">Multi-pass membrane protein</topology>
    </subcellularLocation>
</comment>
<comment type="similarity">
    <text evidence="1">Belongs to the fluoride channel Fluc/FEX (TC 1.A.43) family.</text>
</comment>
<keyword id="KW-0997">Cell inner membrane</keyword>
<keyword id="KW-1003">Cell membrane</keyword>
<keyword id="KW-0407">Ion channel</keyword>
<keyword id="KW-0406">Ion transport</keyword>
<keyword id="KW-0472">Membrane</keyword>
<keyword id="KW-0479">Metal-binding</keyword>
<keyword id="KW-0915">Sodium</keyword>
<keyword id="KW-0812">Transmembrane</keyword>
<keyword id="KW-1133">Transmembrane helix</keyword>
<keyword id="KW-0813">Transport</keyword>
<proteinExistence type="inferred from homology"/>
<gene>
    <name evidence="1" type="primary">fluC</name>
    <name evidence="1" type="synonym">crcB</name>
    <name type="ordered locus">MADE_1010700</name>
</gene>
<feature type="chain" id="PRO_1000189707" description="Fluoride-specific ion channel FluC">
    <location>
        <begin position="1"/>
        <end position="127"/>
    </location>
</feature>
<feature type="transmembrane region" description="Helical" evidence="1">
    <location>
        <begin position="1"/>
        <end position="21"/>
    </location>
</feature>
<feature type="transmembrane region" description="Helical" evidence="1">
    <location>
        <begin position="39"/>
        <end position="59"/>
    </location>
</feature>
<feature type="transmembrane region" description="Helical" evidence="1">
    <location>
        <begin position="72"/>
        <end position="92"/>
    </location>
</feature>
<feature type="transmembrane region" description="Helical" evidence="1">
    <location>
        <begin position="105"/>
        <end position="125"/>
    </location>
</feature>
<feature type="binding site" evidence="1">
    <location>
        <position position="79"/>
    </location>
    <ligand>
        <name>Na(+)</name>
        <dbReference type="ChEBI" id="CHEBI:29101"/>
        <note>structural</note>
    </ligand>
</feature>
<feature type="binding site" evidence="1">
    <location>
        <position position="82"/>
    </location>
    <ligand>
        <name>Na(+)</name>
        <dbReference type="ChEBI" id="CHEBI:29101"/>
        <note>structural</note>
    </ligand>
</feature>
<sequence length="127" mass="13510">MPQGLALYCFIAAGGATGACLRYFVTTSVDSLFGKHMPFGTLTVNVVGSFALALLYGVIERYDLSDSPYRALIGVGLLGAFTTFSTFSVETLTLLENELWLKAAANVFLNVGACLLAGWLAIELMKG</sequence>
<name>FLUC_ALTMD</name>
<organism>
    <name type="scientific">Alteromonas mediterranea (strain DSM 17117 / CIP 110805 / LMG 28347 / Deep ecotype)</name>
    <dbReference type="NCBI Taxonomy" id="1774373"/>
    <lineage>
        <taxon>Bacteria</taxon>
        <taxon>Pseudomonadati</taxon>
        <taxon>Pseudomonadota</taxon>
        <taxon>Gammaproteobacteria</taxon>
        <taxon>Alteromonadales</taxon>
        <taxon>Alteromonadaceae</taxon>
        <taxon>Alteromonas/Salinimonas group</taxon>
        <taxon>Alteromonas</taxon>
    </lineage>
</organism>